<name>PSAA_AGRST</name>
<proteinExistence type="inferred from homology"/>
<evidence type="ECO:0000255" key="1">
    <source>
        <dbReference type="HAMAP-Rule" id="MF_00458"/>
    </source>
</evidence>
<reference key="1">
    <citation type="journal article" date="2007" name="Theor. Appl. Genet.">
        <title>Complete chloroplast genome sequences of Hordeum vulgare, Sorghum bicolor and Agrostis stolonifera, and comparative analyses with other grass genomes.</title>
        <authorList>
            <person name="Saski C."/>
            <person name="Lee S.-B."/>
            <person name="Fjellheim S."/>
            <person name="Guda C."/>
            <person name="Jansen R.K."/>
            <person name="Luo H."/>
            <person name="Tomkins J."/>
            <person name="Rognli O.A."/>
            <person name="Daniell H."/>
            <person name="Clarke J.L."/>
        </authorList>
    </citation>
    <scope>NUCLEOTIDE SEQUENCE [LARGE SCALE GENOMIC DNA]</scope>
    <source>
        <strain>cv. Penn A-4</strain>
    </source>
</reference>
<geneLocation type="chloroplast"/>
<organism>
    <name type="scientific">Agrostis stolonifera</name>
    <name type="common">Creeping bentgrass</name>
    <dbReference type="NCBI Taxonomy" id="63632"/>
    <lineage>
        <taxon>Eukaryota</taxon>
        <taxon>Viridiplantae</taxon>
        <taxon>Streptophyta</taxon>
        <taxon>Embryophyta</taxon>
        <taxon>Tracheophyta</taxon>
        <taxon>Spermatophyta</taxon>
        <taxon>Magnoliopsida</taxon>
        <taxon>Liliopsida</taxon>
        <taxon>Poales</taxon>
        <taxon>Poaceae</taxon>
        <taxon>BOP clade</taxon>
        <taxon>Pooideae</taxon>
        <taxon>Poodae</taxon>
        <taxon>Poeae</taxon>
        <taxon>Poeae Chloroplast Group 1 (Aveneae type)</taxon>
        <taxon>Agrostidodinae</taxon>
        <taxon>Agrostidinae</taxon>
        <taxon>Agrostis</taxon>
    </lineage>
</organism>
<gene>
    <name evidence="1" type="primary">psaA</name>
</gene>
<sequence>MIIRSPEPEVKIVVDRDPVKTSFEEWARPGHFSRTLAKGPDTTTWIWNLHADAHDFDSHTGDLEEISRKVFSAHFGQLSIIFLWLSGMYFHGARFSNYEAWLSDPTHIGPSAQVVWPIVGQEILNGDVGGGFRGIQITSGFFQLWRASGITSELQLYCTAIGALIFAALMLFAGWFHYHKAAPKLAWFQDVESMLNHHLAGLLGLGSLSWAGHQIHVSLPINQFLDAGVDPKEIPLPHEFILNRDLLAQLYPSFAEGATPFFTLNWSKYAEFLTFRGGLDPVTGGLWLTDIAHHHLAIAILFLIAGHMYRTNWGIGHGLKDILEAHKGPFTGQGHKGLYEILTTSWHAQLSLNLAMLGSTTIVVAHHMYAMPPYPYLATDYGTQLSLFTHHMWIGGFLIVGAAAHAAIFMVRDYDPTTRYNDLLDRVLRHRDAIISHLNWVCIFLGFHSFGLYIHNDTMSALGRPQDMFSDTAIQLQPIFAQWVQNIHATAPGVTAPGATTSTSLTWGGGELVAVGGKVALLPIPLGTADFLVHHIHAFTIHVTVLILLKGVLFARSSRLIPDKANLGFRFPCDGPGRGGTCQVSAWDHVFLGLFWMYNAISVVIFHFSWKMQSDVWGTISDQGVVTHITGGNFAQSSITINGWLRDFLWAQASQVIQSYGSSLSAYGLFFLGAHFVWAFSLMFLFSGRGYWQELIESIVWAHNKLKVAPATQPRALSIIQGRAVGVTHYLLGGIATTWAFFLARIIAVG</sequence>
<accession>A1EA08</accession>
<feature type="chain" id="PRO_0000275936" description="Photosystem I P700 chlorophyll a apoprotein A1">
    <location>
        <begin position="1"/>
        <end position="750"/>
    </location>
</feature>
<feature type="transmembrane region" description="Helical; Name=I" evidence="1">
    <location>
        <begin position="70"/>
        <end position="93"/>
    </location>
</feature>
<feature type="transmembrane region" description="Helical; Name=II" evidence="1">
    <location>
        <begin position="156"/>
        <end position="179"/>
    </location>
</feature>
<feature type="transmembrane region" description="Helical; Name=III" evidence="1">
    <location>
        <begin position="195"/>
        <end position="219"/>
    </location>
</feature>
<feature type="transmembrane region" description="Helical; Name=IV" evidence="1">
    <location>
        <begin position="291"/>
        <end position="309"/>
    </location>
</feature>
<feature type="transmembrane region" description="Helical; Name=V" evidence="1">
    <location>
        <begin position="346"/>
        <end position="369"/>
    </location>
</feature>
<feature type="transmembrane region" description="Helical; Name=VI" evidence="1">
    <location>
        <begin position="385"/>
        <end position="411"/>
    </location>
</feature>
<feature type="transmembrane region" description="Helical; Name=VII" evidence="1">
    <location>
        <begin position="433"/>
        <end position="455"/>
    </location>
</feature>
<feature type="transmembrane region" description="Helical; Name=VIII" evidence="1">
    <location>
        <begin position="531"/>
        <end position="549"/>
    </location>
</feature>
<feature type="transmembrane region" description="Helical; Name=IX" evidence="1">
    <location>
        <begin position="589"/>
        <end position="610"/>
    </location>
</feature>
<feature type="transmembrane region" description="Helical; Name=X" evidence="1">
    <location>
        <begin position="664"/>
        <end position="686"/>
    </location>
</feature>
<feature type="transmembrane region" description="Helical; Name=XI" evidence="1">
    <location>
        <begin position="724"/>
        <end position="744"/>
    </location>
</feature>
<feature type="binding site" evidence="1">
    <location>
        <position position="573"/>
    </location>
    <ligand>
        <name>[4Fe-4S] cluster</name>
        <dbReference type="ChEBI" id="CHEBI:49883"/>
        <note>ligand shared between dimeric partners</note>
    </ligand>
</feature>
<feature type="binding site" evidence="1">
    <location>
        <position position="582"/>
    </location>
    <ligand>
        <name>[4Fe-4S] cluster</name>
        <dbReference type="ChEBI" id="CHEBI:49883"/>
        <note>ligand shared between dimeric partners</note>
    </ligand>
</feature>
<feature type="binding site" description="axial binding residue" evidence="1">
    <location>
        <position position="675"/>
    </location>
    <ligand>
        <name>chlorophyll a'</name>
        <dbReference type="ChEBI" id="CHEBI:189419"/>
        <label>A1</label>
    </ligand>
    <ligandPart>
        <name>Mg</name>
        <dbReference type="ChEBI" id="CHEBI:25107"/>
    </ligandPart>
</feature>
<feature type="binding site" description="axial binding residue" evidence="1">
    <location>
        <position position="683"/>
    </location>
    <ligand>
        <name>chlorophyll a</name>
        <dbReference type="ChEBI" id="CHEBI:58416"/>
        <label>A3</label>
    </ligand>
    <ligandPart>
        <name>Mg</name>
        <dbReference type="ChEBI" id="CHEBI:25107"/>
    </ligandPart>
</feature>
<feature type="binding site" evidence="1">
    <location>
        <position position="691"/>
    </location>
    <ligand>
        <name>chlorophyll a</name>
        <dbReference type="ChEBI" id="CHEBI:58416"/>
        <label>A3</label>
    </ligand>
</feature>
<feature type="binding site" evidence="1">
    <location>
        <position position="692"/>
    </location>
    <ligand>
        <name>phylloquinone</name>
        <dbReference type="ChEBI" id="CHEBI:18067"/>
        <label>A</label>
    </ligand>
</feature>
<dbReference type="EC" id="1.97.1.12" evidence="1"/>
<dbReference type="EMBL" id="EF115543">
    <property type="protein sequence ID" value="ABK79580.1"/>
    <property type="molecule type" value="Genomic_DNA"/>
</dbReference>
<dbReference type="RefSeq" id="YP_874736.1">
    <property type="nucleotide sequence ID" value="NC_008591.1"/>
</dbReference>
<dbReference type="SMR" id="A1EA08"/>
<dbReference type="GeneID" id="4524932"/>
<dbReference type="GO" id="GO:0009535">
    <property type="term" value="C:chloroplast thylakoid membrane"/>
    <property type="evidence" value="ECO:0007669"/>
    <property type="project" value="UniProtKB-SubCell"/>
</dbReference>
<dbReference type="GO" id="GO:0009522">
    <property type="term" value="C:photosystem I"/>
    <property type="evidence" value="ECO:0007669"/>
    <property type="project" value="UniProtKB-KW"/>
</dbReference>
<dbReference type="GO" id="GO:0051539">
    <property type="term" value="F:4 iron, 4 sulfur cluster binding"/>
    <property type="evidence" value="ECO:0007669"/>
    <property type="project" value="UniProtKB-KW"/>
</dbReference>
<dbReference type="GO" id="GO:0016168">
    <property type="term" value="F:chlorophyll binding"/>
    <property type="evidence" value="ECO:0007669"/>
    <property type="project" value="UniProtKB-KW"/>
</dbReference>
<dbReference type="GO" id="GO:0009055">
    <property type="term" value="F:electron transfer activity"/>
    <property type="evidence" value="ECO:0007669"/>
    <property type="project" value="UniProtKB-UniRule"/>
</dbReference>
<dbReference type="GO" id="GO:0000287">
    <property type="term" value="F:magnesium ion binding"/>
    <property type="evidence" value="ECO:0007669"/>
    <property type="project" value="UniProtKB-UniRule"/>
</dbReference>
<dbReference type="GO" id="GO:0016491">
    <property type="term" value="F:oxidoreductase activity"/>
    <property type="evidence" value="ECO:0007669"/>
    <property type="project" value="UniProtKB-KW"/>
</dbReference>
<dbReference type="GO" id="GO:0015979">
    <property type="term" value="P:photosynthesis"/>
    <property type="evidence" value="ECO:0007669"/>
    <property type="project" value="UniProtKB-UniRule"/>
</dbReference>
<dbReference type="FunFam" id="1.20.1130.10:FF:000001">
    <property type="entry name" value="Photosystem I P700 chlorophyll a apoprotein A2"/>
    <property type="match status" value="1"/>
</dbReference>
<dbReference type="Gene3D" id="1.20.1130.10">
    <property type="entry name" value="Photosystem I PsaA/PsaB"/>
    <property type="match status" value="1"/>
</dbReference>
<dbReference type="HAMAP" id="MF_00458">
    <property type="entry name" value="PSI_PsaA"/>
    <property type="match status" value="1"/>
</dbReference>
<dbReference type="InterPro" id="IPR006243">
    <property type="entry name" value="PSI_PsaA"/>
</dbReference>
<dbReference type="InterPro" id="IPR001280">
    <property type="entry name" value="PSI_PsaA/B"/>
</dbReference>
<dbReference type="InterPro" id="IPR020586">
    <property type="entry name" value="PSI_PsaA/B_CS"/>
</dbReference>
<dbReference type="InterPro" id="IPR036408">
    <property type="entry name" value="PSI_PsaA/B_sf"/>
</dbReference>
<dbReference type="NCBIfam" id="TIGR01335">
    <property type="entry name" value="psaA"/>
    <property type="match status" value="1"/>
</dbReference>
<dbReference type="PANTHER" id="PTHR30128">
    <property type="entry name" value="OUTER MEMBRANE PROTEIN, OMPA-RELATED"/>
    <property type="match status" value="1"/>
</dbReference>
<dbReference type="PANTHER" id="PTHR30128:SF19">
    <property type="entry name" value="PHOTOSYSTEM I P700 CHLOROPHYLL A APOPROTEIN A1-RELATED"/>
    <property type="match status" value="1"/>
</dbReference>
<dbReference type="Pfam" id="PF00223">
    <property type="entry name" value="PsaA_PsaB"/>
    <property type="match status" value="1"/>
</dbReference>
<dbReference type="PIRSF" id="PIRSF002905">
    <property type="entry name" value="PSI_A"/>
    <property type="match status" value="1"/>
</dbReference>
<dbReference type="PRINTS" id="PR00257">
    <property type="entry name" value="PHOTSYSPSAAB"/>
</dbReference>
<dbReference type="SUPFAM" id="SSF81558">
    <property type="entry name" value="Photosystem I subunits PsaA/PsaB"/>
    <property type="match status" value="1"/>
</dbReference>
<dbReference type="PROSITE" id="PS00419">
    <property type="entry name" value="PHOTOSYSTEM_I_PSAAB"/>
    <property type="match status" value="1"/>
</dbReference>
<keyword id="KW-0004">4Fe-4S</keyword>
<keyword id="KW-0148">Chlorophyll</keyword>
<keyword id="KW-0150">Chloroplast</keyword>
<keyword id="KW-0157">Chromophore</keyword>
<keyword id="KW-0249">Electron transport</keyword>
<keyword id="KW-0408">Iron</keyword>
<keyword id="KW-0411">Iron-sulfur</keyword>
<keyword id="KW-0460">Magnesium</keyword>
<keyword id="KW-0472">Membrane</keyword>
<keyword id="KW-0479">Metal-binding</keyword>
<keyword id="KW-0560">Oxidoreductase</keyword>
<keyword id="KW-0602">Photosynthesis</keyword>
<keyword id="KW-0603">Photosystem I</keyword>
<keyword id="KW-0934">Plastid</keyword>
<keyword id="KW-0793">Thylakoid</keyword>
<keyword id="KW-0812">Transmembrane</keyword>
<keyword id="KW-1133">Transmembrane helix</keyword>
<keyword id="KW-0813">Transport</keyword>
<protein>
    <recommendedName>
        <fullName evidence="1">Photosystem I P700 chlorophyll a apoprotein A1</fullName>
        <ecNumber evidence="1">1.97.1.12</ecNumber>
    </recommendedName>
    <alternativeName>
        <fullName evidence="1">PSI-A</fullName>
    </alternativeName>
    <alternativeName>
        <fullName evidence="1">PsaA</fullName>
    </alternativeName>
</protein>
<comment type="function">
    <text>PsaA and PsaB bind P700, the primary electron donor of photosystem I (PSI), as well as the electron acceptors A0, A1 and FX. PSI is a plastocyanin-ferredoxin oxidoreductase, converting photonic excitation into a charge separation, which transfers an electron from the donor P700 chlorophyll pair to the spectroscopically characterized acceptors A0, A1, FX, FA and FB in turn. Oxidized P700 is reduced on the lumenal side of the thylakoid membrane by plastocyanin.</text>
</comment>
<comment type="catalytic activity">
    <reaction evidence="1">
        <text>reduced [plastocyanin] + hnu + oxidized [2Fe-2S]-[ferredoxin] = oxidized [plastocyanin] + reduced [2Fe-2S]-[ferredoxin]</text>
        <dbReference type="Rhea" id="RHEA:30407"/>
        <dbReference type="Rhea" id="RHEA-COMP:10000"/>
        <dbReference type="Rhea" id="RHEA-COMP:10001"/>
        <dbReference type="Rhea" id="RHEA-COMP:10039"/>
        <dbReference type="Rhea" id="RHEA-COMP:10040"/>
        <dbReference type="ChEBI" id="CHEBI:29036"/>
        <dbReference type="ChEBI" id="CHEBI:30212"/>
        <dbReference type="ChEBI" id="CHEBI:33737"/>
        <dbReference type="ChEBI" id="CHEBI:33738"/>
        <dbReference type="ChEBI" id="CHEBI:49552"/>
        <dbReference type="EC" id="1.97.1.12"/>
    </reaction>
</comment>
<comment type="cofactor">
    <text evidence="1">P700 is a chlorophyll a/chlorophyll a' dimer, A0 is one or more chlorophyll a, A1 is one or both phylloquinones and FX is a shared 4Fe-4S iron-sulfur center.</text>
</comment>
<comment type="subunit">
    <text evidence="1">The PsaA/B heterodimer binds the P700 chlorophyll special pair and subsequent electron acceptors. PSI consists of a core antenna complex that captures photons, and an electron transfer chain that converts photonic excitation into a charge separation. The eukaryotic PSI reaction center is composed of at least 11 subunits.</text>
</comment>
<comment type="subcellular location">
    <subcellularLocation>
        <location evidence="1">Plastid</location>
        <location evidence="1">Chloroplast thylakoid membrane</location>
        <topology evidence="1">Multi-pass membrane protein</topology>
    </subcellularLocation>
</comment>
<comment type="similarity">
    <text evidence="1">Belongs to the PsaA/PsaB family.</text>
</comment>